<comment type="similarity">
    <text evidence="1">Belongs to the bacterial ribosomal protein bL35 family.</text>
</comment>
<organism>
    <name type="scientific">Coxiella burnetii (strain RSA 331 / Henzerling II)</name>
    <dbReference type="NCBI Taxonomy" id="360115"/>
    <lineage>
        <taxon>Bacteria</taxon>
        <taxon>Pseudomonadati</taxon>
        <taxon>Pseudomonadota</taxon>
        <taxon>Gammaproteobacteria</taxon>
        <taxon>Legionellales</taxon>
        <taxon>Coxiellaceae</taxon>
        <taxon>Coxiella</taxon>
    </lineage>
</organism>
<dbReference type="EMBL" id="CP000890">
    <property type="protein sequence ID" value="ABX78866.1"/>
    <property type="molecule type" value="Genomic_DNA"/>
</dbReference>
<dbReference type="RefSeq" id="WP_012220603.1">
    <property type="nucleotide sequence ID" value="NC_010117.1"/>
</dbReference>
<dbReference type="SMR" id="A9N8K3"/>
<dbReference type="KEGG" id="cbs:COXBURSA331_A1476"/>
<dbReference type="HOGENOM" id="CLU_169643_1_1_6"/>
<dbReference type="GO" id="GO:0022625">
    <property type="term" value="C:cytosolic large ribosomal subunit"/>
    <property type="evidence" value="ECO:0007669"/>
    <property type="project" value="TreeGrafter"/>
</dbReference>
<dbReference type="GO" id="GO:0003735">
    <property type="term" value="F:structural constituent of ribosome"/>
    <property type="evidence" value="ECO:0007669"/>
    <property type="project" value="InterPro"/>
</dbReference>
<dbReference type="GO" id="GO:0006412">
    <property type="term" value="P:translation"/>
    <property type="evidence" value="ECO:0007669"/>
    <property type="project" value="UniProtKB-UniRule"/>
</dbReference>
<dbReference type="FunFam" id="4.10.410.60:FF:000001">
    <property type="entry name" value="50S ribosomal protein L35"/>
    <property type="match status" value="1"/>
</dbReference>
<dbReference type="Gene3D" id="4.10.410.60">
    <property type="match status" value="1"/>
</dbReference>
<dbReference type="HAMAP" id="MF_00514">
    <property type="entry name" value="Ribosomal_bL35"/>
    <property type="match status" value="1"/>
</dbReference>
<dbReference type="InterPro" id="IPR001706">
    <property type="entry name" value="Ribosomal_bL35"/>
</dbReference>
<dbReference type="InterPro" id="IPR021137">
    <property type="entry name" value="Ribosomal_bL35-like"/>
</dbReference>
<dbReference type="InterPro" id="IPR018265">
    <property type="entry name" value="Ribosomal_bL35_CS"/>
</dbReference>
<dbReference type="InterPro" id="IPR037229">
    <property type="entry name" value="Ribosomal_bL35_sf"/>
</dbReference>
<dbReference type="NCBIfam" id="TIGR00001">
    <property type="entry name" value="rpmI_bact"/>
    <property type="match status" value="1"/>
</dbReference>
<dbReference type="PANTHER" id="PTHR33343">
    <property type="entry name" value="54S RIBOSOMAL PROTEIN BL35M"/>
    <property type="match status" value="1"/>
</dbReference>
<dbReference type="PANTHER" id="PTHR33343:SF1">
    <property type="entry name" value="LARGE RIBOSOMAL SUBUNIT PROTEIN BL35M"/>
    <property type="match status" value="1"/>
</dbReference>
<dbReference type="Pfam" id="PF01632">
    <property type="entry name" value="Ribosomal_L35p"/>
    <property type="match status" value="1"/>
</dbReference>
<dbReference type="PRINTS" id="PR00064">
    <property type="entry name" value="RIBOSOMALL35"/>
</dbReference>
<dbReference type="SUPFAM" id="SSF143034">
    <property type="entry name" value="L35p-like"/>
    <property type="match status" value="1"/>
</dbReference>
<dbReference type="PROSITE" id="PS00936">
    <property type="entry name" value="RIBOSOMAL_L35"/>
    <property type="match status" value="1"/>
</dbReference>
<evidence type="ECO:0000255" key="1">
    <source>
        <dbReference type="HAMAP-Rule" id="MF_00514"/>
    </source>
</evidence>
<evidence type="ECO:0000305" key="2"/>
<proteinExistence type="inferred from homology"/>
<feature type="chain" id="PRO_1000081605" description="Large ribosomal subunit protein bL35">
    <location>
        <begin position="1"/>
        <end position="64"/>
    </location>
</feature>
<reference key="1">
    <citation type="submission" date="2007-11" db="EMBL/GenBank/DDBJ databases">
        <title>Genome sequencing of phylogenetically and phenotypically diverse Coxiella burnetii isolates.</title>
        <authorList>
            <person name="Seshadri R."/>
            <person name="Samuel J.E."/>
        </authorList>
    </citation>
    <scope>NUCLEOTIDE SEQUENCE [LARGE SCALE GENOMIC DNA]</scope>
    <source>
        <strain>RSA 331 / Henzerling II</strain>
    </source>
</reference>
<protein>
    <recommendedName>
        <fullName evidence="1">Large ribosomal subunit protein bL35</fullName>
    </recommendedName>
    <alternativeName>
        <fullName evidence="2">50S ribosomal protein L35</fullName>
    </alternativeName>
</protein>
<name>RL35_COXBR</name>
<gene>
    <name evidence="1" type="primary">rpmI</name>
    <name type="ordered locus">COXBURSA331_A1476</name>
</gene>
<sequence>MPKLKTNRGAVKRFKVTGSGKIKRAASNHNHMLTKKSQKRKRRLRKIHEVAPSDMRAVSEMLRD</sequence>
<accession>A9N8K3</accession>
<keyword id="KW-0687">Ribonucleoprotein</keyword>
<keyword id="KW-0689">Ribosomal protein</keyword>